<proteinExistence type="inferred from homology"/>
<evidence type="ECO:0000255" key="1">
    <source>
        <dbReference type="HAMAP-Rule" id="MF_00340"/>
    </source>
</evidence>
<evidence type="ECO:0000256" key="2">
    <source>
        <dbReference type="SAM" id="MobiDB-lite"/>
    </source>
</evidence>
<evidence type="ECO:0000305" key="3"/>
<reference key="1">
    <citation type="journal article" date="2008" name="J. Bacteriol.">
        <title>The pangenome structure of Escherichia coli: comparative genomic analysis of E. coli commensal and pathogenic isolates.</title>
        <authorList>
            <person name="Rasko D.A."/>
            <person name="Rosovitz M.J."/>
            <person name="Myers G.S.A."/>
            <person name="Mongodin E.F."/>
            <person name="Fricke W.F."/>
            <person name="Gajer P."/>
            <person name="Crabtree J."/>
            <person name="Sebaihia M."/>
            <person name="Thomson N.R."/>
            <person name="Chaudhuri R."/>
            <person name="Henderson I.R."/>
            <person name="Sperandio V."/>
            <person name="Ravel J."/>
        </authorList>
    </citation>
    <scope>NUCLEOTIDE SEQUENCE [LARGE SCALE GENOMIC DNA]</scope>
    <source>
        <strain>HS</strain>
    </source>
</reference>
<gene>
    <name evidence="1" type="primary">rpmF</name>
    <name type="ordered locus">EcHS_A1211</name>
</gene>
<feature type="chain" id="PRO_1000059819" description="Large ribosomal subunit protein bL32">
    <location>
        <begin position="1"/>
        <end position="57"/>
    </location>
</feature>
<feature type="region of interest" description="Disordered" evidence="2">
    <location>
        <begin position="1"/>
        <end position="38"/>
    </location>
</feature>
<dbReference type="EMBL" id="CP000802">
    <property type="protein sequence ID" value="ABV05550.1"/>
    <property type="molecule type" value="Genomic_DNA"/>
</dbReference>
<dbReference type="RefSeq" id="WP_000290727.1">
    <property type="nucleotide sequence ID" value="NC_009800.1"/>
</dbReference>
<dbReference type="SMR" id="A7ZZ46"/>
<dbReference type="GeneID" id="93776319"/>
<dbReference type="KEGG" id="ecx:EcHS_A1211"/>
<dbReference type="HOGENOM" id="CLU_129084_2_1_6"/>
<dbReference type="GO" id="GO:0015934">
    <property type="term" value="C:large ribosomal subunit"/>
    <property type="evidence" value="ECO:0007669"/>
    <property type="project" value="InterPro"/>
</dbReference>
<dbReference type="GO" id="GO:0003735">
    <property type="term" value="F:structural constituent of ribosome"/>
    <property type="evidence" value="ECO:0007669"/>
    <property type="project" value="InterPro"/>
</dbReference>
<dbReference type="GO" id="GO:0006412">
    <property type="term" value="P:translation"/>
    <property type="evidence" value="ECO:0007669"/>
    <property type="project" value="UniProtKB-UniRule"/>
</dbReference>
<dbReference type="HAMAP" id="MF_00340">
    <property type="entry name" value="Ribosomal_bL32"/>
    <property type="match status" value="1"/>
</dbReference>
<dbReference type="InterPro" id="IPR002677">
    <property type="entry name" value="Ribosomal_bL32"/>
</dbReference>
<dbReference type="InterPro" id="IPR044957">
    <property type="entry name" value="Ribosomal_bL32_bact"/>
</dbReference>
<dbReference type="InterPro" id="IPR011332">
    <property type="entry name" value="Ribosomal_zn-bd"/>
</dbReference>
<dbReference type="NCBIfam" id="TIGR01031">
    <property type="entry name" value="rpmF_bact"/>
    <property type="match status" value="1"/>
</dbReference>
<dbReference type="PANTHER" id="PTHR35534">
    <property type="entry name" value="50S RIBOSOMAL PROTEIN L32"/>
    <property type="match status" value="1"/>
</dbReference>
<dbReference type="PANTHER" id="PTHR35534:SF1">
    <property type="entry name" value="LARGE RIBOSOMAL SUBUNIT PROTEIN BL32"/>
    <property type="match status" value="1"/>
</dbReference>
<dbReference type="Pfam" id="PF01783">
    <property type="entry name" value="Ribosomal_L32p"/>
    <property type="match status" value="1"/>
</dbReference>
<dbReference type="SUPFAM" id="SSF57829">
    <property type="entry name" value="Zn-binding ribosomal proteins"/>
    <property type="match status" value="1"/>
</dbReference>
<comment type="similarity">
    <text evidence="1">Belongs to the bacterial ribosomal protein bL32 family.</text>
</comment>
<organism>
    <name type="scientific">Escherichia coli O9:H4 (strain HS)</name>
    <dbReference type="NCBI Taxonomy" id="331112"/>
    <lineage>
        <taxon>Bacteria</taxon>
        <taxon>Pseudomonadati</taxon>
        <taxon>Pseudomonadota</taxon>
        <taxon>Gammaproteobacteria</taxon>
        <taxon>Enterobacterales</taxon>
        <taxon>Enterobacteriaceae</taxon>
        <taxon>Escherichia</taxon>
    </lineage>
</organism>
<accession>A7ZZ46</accession>
<keyword id="KW-0687">Ribonucleoprotein</keyword>
<keyword id="KW-0689">Ribosomal protein</keyword>
<sequence length="57" mass="6446">MAVQQNKPTRSKRGMRRSHDALTAVTSLSVDKTSGEKHLRHHITADGYYRGRKVIAK</sequence>
<protein>
    <recommendedName>
        <fullName evidence="1">Large ribosomal subunit protein bL32</fullName>
    </recommendedName>
    <alternativeName>
        <fullName evidence="3">50S ribosomal protein L32</fullName>
    </alternativeName>
</protein>
<name>RL32_ECOHS</name>